<name>CHSD_ASPFU</name>
<reference key="1">
    <citation type="journal article" date="1996" name="FEMS Microbiol. Lett.">
        <title>Cloning and characterization of chsD, a chitin synthase-like gene of Aspergillus fumigatus.</title>
        <authorList>
            <person name="Mellado E."/>
            <person name="Specht C.A."/>
            <person name="Robbins P.W."/>
            <person name="Holden D.W."/>
        </authorList>
    </citation>
    <scope>NUCLEOTIDE SEQUENCE [GENOMIC DNA]</scope>
    <source>
        <strain>H237</strain>
    </source>
</reference>
<reference key="2">
    <citation type="journal article" date="2004" name="Fungal Genet. Biol.">
        <title>Insight into the genome of Aspergillus fumigatus: analysis of a 922 kb region encompassing the nitrate assimilation gene cluster.</title>
        <authorList>
            <person name="Pain A."/>
            <person name="Woodward J.R."/>
            <person name="Quail M.A."/>
            <person name="Anderson M.J."/>
            <person name="Clark R."/>
            <person name="Collins M."/>
            <person name="Fosker N."/>
            <person name="Fraser A."/>
            <person name="Harris D.E."/>
            <person name="Larke N."/>
            <person name="Murphy L.D."/>
            <person name="Humphray S."/>
            <person name="O'Neil S."/>
            <person name="Pertea M."/>
            <person name="Price C."/>
            <person name="Rabbinowitsch E."/>
            <person name="Rajandream M.A."/>
            <person name="Salzberg S.L."/>
            <person name="Saunders D."/>
            <person name="Seeger K."/>
            <person name="Sharp S."/>
            <person name="Warren T."/>
            <person name="Denning D.W."/>
            <person name="Barrell B.G."/>
            <person name="Hall N."/>
        </authorList>
    </citation>
    <scope>NUCLEOTIDE SEQUENCE [LARGE SCALE GENOMIC DNA]</scope>
    <source>
        <strain>ATCC MYA-4609 / CBS 101355 / FGSC A1100 / Af293</strain>
    </source>
</reference>
<reference key="3">
    <citation type="journal article" date="2005" name="Nature">
        <title>Genomic sequence of the pathogenic and allergenic filamentous fungus Aspergillus fumigatus.</title>
        <authorList>
            <person name="Nierman W.C."/>
            <person name="Pain A."/>
            <person name="Anderson M.J."/>
            <person name="Wortman J.R."/>
            <person name="Kim H.S."/>
            <person name="Arroyo J."/>
            <person name="Berriman M."/>
            <person name="Abe K."/>
            <person name="Archer D.B."/>
            <person name="Bermejo C."/>
            <person name="Bennett J.W."/>
            <person name="Bowyer P."/>
            <person name="Chen D."/>
            <person name="Collins M."/>
            <person name="Coulsen R."/>
            <person name="Davies R."/>
            <person name="Dyer P.S."/>
            <person name="Farman M.L."/>
            <person name="Fedorova N."/>
            <person name="Fedorova N.D."/>
            <person name="Feldblyum T.V."/>
            <person name="Fischer R."/>
            <person name="Fosker N."/>
            <person name="Fraser A."/>
            <person name="Garcia J.L."/>
            <person name="Garcia M.J."/>
            <person name="Goble A."/>
            <person name="Goldman G.H."/>
            <person name="Gomi K."/>
            <person name="Griffith-Jones S."/>
            <person name="Gwilliam R."/>
            <person name="Haas B.J."/>
            <person name="Haas H."/>
            <person name="Harris D.E."/>
            <person name="Horiuchi H."/>
            <person name="Huang J."/>
            <person name="Humphray S."/>
            <person name="Jimenez J."/>
            <person name="Keller N."/>
            <person name="Khouri H."/>
            <person name="Kitamoto K."/>
            <person name="Kobayashi T."/>
            <person name="Konzack S."/>
            <person name="Kulkarni R."/>
            <person name="Kumagai T."/>
            <person name="Lafton A."/>
            <person name="Latge J.-P."/>
            <person name="Li W."/>
            <person name="Lord A."/>
            <person name="Lu C."/>
            <person name="Majoros W.H."/>
            <person name="May G.S."/>
            <person name="Miller B.L."/>
            <person name="Mohamoud Y."/>
            <person name="Molina M."/>
            <person name="Monod M."/>
            <person name="Mouyna I."/>
            <person name="Mulligan S."/>
            <person name="Murphy L.D."/>
            <person name="O'Neil S."/>
            <person name="Paulsen I."/>
            <person name="Penalva M.A."/>
            <person name="Pertea M."/>
            <person name="Price C."/>
            <person name="Pritchard B.L."/>
            <person name="Quail M.A."/>
            <person name="Rabbinowitsch E."/>
            <person name="Rawlins N."/>
            <person name="Rajandream M.A."/>
            <person name="Reichard U."/>
            <person name="Renauld H."/>
            <person name="Robson G.D."/>
            <person name="Rodriguez de Cordoba S."/>
            <person name="Rodriguez-Pena J.M."/>
            <person name="Ronning C.M."/>
            <person name="Rutter S."/>
            <person name="Salzberg S.L."/>
            <person name="Sanchez M."/>
            <person name="Sanchez-Ferrero J.C."/>
            <person name="Saunders D."/>
            <person name="Seeger K."/>
            <person name="Squares R."/>
            <person name="Squares S."/>
            <person name="Takeuchi M."/>
            <person name="Tekaia F."/>
            <person name="Turner G."/>
            <person name="Vazquez de Aldana C.R."/>
            <person name="Weidman J."/>
            <person name="White O."/>
            <person name="Woodward J.R."/>
            <person name="Yu J.-H."/>
            <person name="Fraser C.M."/>
            <person name="Galagan J.E."/>
            <person name="Asai K."/>
            <person name="Machida M."/>
            <person name="Hall N."/>
            <person name="Barrell B.G."/>
            <person name="Denning D.W."/>
        </authorList>
    </citation>
    <scope>NUCLEOTIDE SEQUENCE [LARGE SCALE GENOMIC DNA]</scope>
    <source>
        <strain>ATCC MYA-4609 / CBS 101355 / FGSC A1100 / Af293</strain>
    </source>
</reference>
<evidence type="ECO:0000255" key="1"/>
<evidence type="ECO:0000256" key="2">
    <source>
        <dbReference type="SAM" id="MobiDB-lite"/>
    </source>
</evidence>
<evidence type="ECO:0000305" key="3"/>
<dbReference type="EC" id="2.4.1.16"/>
<dbReference type="EMBL" id="U62614">
    <property type="protein sequence ID" value="AAB60781.1"/>
    <property type="molecule type" value="Genomic_DNA"/>
</dbReference>
<dbReference type="EMBL" id="BX649606">
    <property type="protein sequence ID" value="CAF31978.1"/>
    <property type="molecule type" value="Genomic_DNA"/>
</dbReference>
<dbReference type="EMBL" id="AAHF01000004">
    <property type="protein sequence ID" value="EAL90592.1"/>
    <property type="molecule type" value="Genomic_DNA"/>
</dbReference>
<dbReference type="RefSeq" id="XP_752630.1">
    <property type="nucleotide sequence ID" value="XM_747537.1"/>
</dbReference>
<dbReference type="SMR" id="P78746"/>
<dbReference type="STRING" id="330879.P78746"/>
<dbReference type="CAZy" id="GT2">
    <property type="family name" value="Glycosyltransferase Family 2"/>
</dbReference>
<dbReference type="GeneID" id="3510460"/>
<dbReference type="KEGG" id="afm:AFUA_1G12600"/>
<dbReference type="eggNOG" id="KOG2571">
    <property type="taxonomic scope" value="Eukaryota"/>
</dbReference>
<dbReference type="HOGENOM" id="CLU_012773_0_0_1"/>
<dbReference type="InParanoid" id="P78746"/>
<dbReference type="OrthoDB" id="5321960at2759"/>
<dbReference type="Proteomes" id="UP000002530">
    <property type="component" value="Chromosome 1"/>
</dbReference>
<dbReference type="GO" id="GO:0071944">
    <property type="term" value="C:cell periphery"/>
    <property type="evidence" value="ECO:0000318"/>
    <property type="project" value="GO_Central"/>
</dbReference>
<dbReference type="GO" id="GO:0030428">
    <property type="term" value="C:cell septum"/>
    <property type="evidence" value="ECO:0000318"/>
    <property type="project" value="GO_Central"/>
</dbReference>
<dbReference type="GO" id="GO:0005886">
    <property type="term" value="C:plasma membrane"/>
    <property type="evidence" value="ECO:0007669"/>
    <property type="project" value="UniProtKB-SubCell"/>
</dbReference>
<dbReference type="GO" id="GO:0004100">
    <property type="term" value="F:chitin synthase activity"/>
    <property type="evidence" value="ECO:0000318"/>
    <property type="project" value="GO_Central"/>
</dbReference>
<dbReference type="GO" id="GO:0071555">
    <property type="term" value="P:cell wall organization"/>
    <property type="evidence" value="ECO:0007669"/>
    <property type="project" value="UniProtKB-KW"/>
</dbReference>
<dbReference type="GO" id="GO:0006031">
    <property type="term" value="P:chitin biosynthetic process"/>
    <property type="evidence" value="ECO:0000318"/>
    <property type="project" value="GO_Central"/>
</dbReference>
<dbReference type="FunFam" id="3.90.550.10:FF:000077">
    <property type="entry name" value="Probable chitin synthase D"/>
    <property type="match status" value="1"/>
</dbReference>
<dbReference type="Gene3D" id="3.90.550.10">
    <property type="entry name" value="Spore Coat Polysaccharide Biosynthesis Protein SpsA, Chain A"/>
    <property type="match status" value="1"/>
</dbReference>
<dbReference type="InterPro" id="IPR004835">
    <property type="entry name" value="Chitin_synth"/>
</dbReference>
<dbReference type="InterPro" id="IPR029044">
    <property type="entry name" value="Nucleotide-diphossugar_trans"/>
</dbReference>
<dbReference type="PANTHER" id="PTHR22914">
    <property type="entry name" value="CHITIN SYNTHASE"/>
    <property type="match status" value="1"/>
</dbReference>
<dbReference type="PANTHER" id="PTHR22914:SF46">
    <property type="entry name" value="CHITIN SYNTHASE"/>
    <property type="match status" value="1"/>
</dbReference>
<dbReference type="Pfam" id="PF03142">
    <property type="entry name" value="Chitin_synth_2"/>
    <property type="match status" value="1"/>
</dbReference>
<dbReference type="SUPFAM" id="SSF53448">
    <property type="entry name" value="Nucleotide-diphospho-sugar transferases"/>
    <property type="match status" value="1"/>
</dbReference>
<feature type="chain" id="PRO_0000193681" description="Chitin synthase D">
    <location>
        <begin position="1"/>
        <end position="745"/>
    </location>
</feature>
<feature type="transmembrane region" description="Helical" evidence="1">
    <location>
        <begin position="26"/>
        <end position="46"/>
    </location>
</feature>
<feature type="transmembrane region" description="Helical" evidence="1">
    <location>
        <begin position="55"/>
        <end position="75"/>
    </location>
</feature>
<feature type="transmembrane region" description="Helical" evidence="1">
    <location>
        <begin position="412"/>
        <end position="432"/>
    </location>
</feature>
<feature type="transmembrane region" description="Helical" evidence="1">
    <location>
        <begin position="434"/>
        <end position="454"/>
    </location>
</feature>
<feature type="transmembrane region" description="Helical" evidence="1">
    <location>
        <begin position="464"/>
        <end position="484"/>
    </location>
</feature>
<feature type="region of interest" description="Disordered" evidence="2">
    <location>
        <begin position="613"/>
        <end position="635"/>
    </location>
</feature>
<feature type="region of interest" description="Disordered" evidence="2">
    <location>
        <begin position="672"/>
        <end position="745"/>
    </location>
</feature>
<feature type="compositionally biased region" description="Polar residues" evidence="2">
    <location>
        <begin position="707"/>
        <end position="720"/>
    </location>
</feature>
<feature type="sequence conflict" description="In Ref. 3; EAL90592." evidence="3" ref="3">
    <location>
        <begin position="10"/>
        <end position="29"/>
    </location>
</feature>
<feature type="sequence conflict" description="In Ref. 2; CAF31978." evidence="3" ref="2">
    <location>
        <begin position="16"/>
        <end position="20"/>
    </location>
</feature>
<protein>
    <recommendedName>
        <fullName>Chitin synthase D</fullName>
        <ecNumber>2.4.1.16</ecNumber>
    </recommendedName>
    <alternativeName>
        <fullName>Chitin-UDP acetyl-glucosaminyl transferase D</fullName>
    </alternativeName>
    <alternativeName>
        <fullName>Class-VI chitin synthase D</fullName>
    </alternativeName>
</protein>
<keyword id="KW-1003">Cell membrane</keyword>
<keyword id="KW-0961">Cell wall biogenesis/degradation</keyword>
<keyword id="KW-0328">Glycosyltransferase</keyword>
<keyword id="KW-0472">Membrane</keyword>
<keyword id="KW-1185">Reference proteome</keyword>
<keyword id="KW-0808">Transferase</keyword>
<keyword id="KW-0812">Transmembrane</keyword>
<keyword id="KW-1133">Transmembrane helix</keyword>
<sequence length="745" mass="84522">MIVLFTLLRWAPISPVFSMRTMHANLAHRGIFLPVMIVTLPLPVHLRRRFPAQMVLMLQWFAFGMFSVLLIIPWLLCVYRLVTHSPGRTKRIKQVLDDRTAPKTVVVMPVYKEAPETLIRAIDSVVDCDYPANCIHVFLSYDGCLIDESYLRLIEHLGIPITLESYPQSIDVTYKDARITVSRFKHGGKRHCQKQTFRLIDMVYADYLERHDNLFVLFIDSDCILDRVCLQNFMYDMELKPGSKHDMLAMTGVITSTTDRGSLLTLLQDMEYVHGQLFERSVESSCGAVTCLPGALTMLRFSAFRKMAKYYFADKAEQCEDFFDYGKCHLGEDRWLTHLFMVGARKRYQIQMCAGAFCKTEAVQTFSSLLKQRRRWFLGFITNEVCMLTDVRLWKRYPLLCLVRFMQNTIRTTALLFFIIALSLITTSSSINDLPVGFIAISLGLNYVLMFYLGAKLKRYKAWLFPLMFILNPFFNWLYMVYGILTAGQRTWGGPRADAATADEHTSPEEAVELAKAQGDELNVDLTTFRSRGDEKSVPIHPSEKIDGRFSAPELPDGYDSNLNDSNAALTELMTPLPSVPRIGIHTYPSSDSILTSDSLSSIHLPLKVEELTGDNDNMKPYPDRQPRDTSSLHQMQRTCSNGIVASDSCSSQDDASEMVNKPEILSPSAHILPHPSQATESSSGEDIYPLHLPSPHQHEAHFAPLNASTRGSMEGNTPEVQRPRRKLPGIPRPIRAQKDPESMV</sequence>
<gene>
    <name type="primary">chsD</name>
    <name type="ORF">AfA5C5.045</name>
    <name type="ORF">AFUA_1G12600</name>
</gene>
<accession>P78746</accession>
<accession>Q4WSJ0</accession>
<accession>Q6MYM5</accession>
<comment type="function">
    <text evidence="3">Polymerizes chitin, a structural polymer of the cell wall and septum, by transferring the sugar moiety of UDP-GlcNAc to the non-reducing end of the growing chitin polymer.</text>
</comment>
<comment type="catalytic activity">
    <reaction>
        <text>[(1-&gt;4)-N-acetyl-beta-D-glucosaminyl](n) + UDP-N-acetyl-alpha-D-glucosamine = [(1-&gt;4)-N-acetyl-beta-D-glucosaminyl](n+1) + UDP + H(+)</text>
        <dbReference type="Rhea" id="RHEA:16637"/>
        <dbReference type="Rhea" id="RHEA-COMP:9593"/>
        <dbReference type="Rhea" id="RHEA-COMP:9595"/>
        <dbReference type="ChEBI" id="CHEBI:15378"/>
        <dbReference type="ChEBI" id="CHEBI:17029"/>
        <dbReference type="ChEBI" id="CHEBI:57705"/>
        <dbReference type="ChEBI" id="CHEBI:58223"/>
        <dbReference type="EC" id="2.4.1.16"/>
    </reaction>
</comment>
<comment type="subcellular location">
    <subcellularLocation>
        <location evidence="3">Cell membrane</location>
        <topology evidence="1">Multi-pass membrane protein</topology>
    </subcellularLocation>
</comment>
<comment type="similarity">
    <text evidence="3">Belongs to the chitin synthase family. Class VI subfamily.</text>
</comment>
<proteinExistence type="inferred from homology"/>
<organism>
    <name type="scientific">Aspergillus fumigatus (strain ATCC MYA-4609 / CBS 101355 / FGSC A1100 / Af293)</name>
    <name type="common">Neosartorya fumigata</name>
    <dbReference type="NCBI Taxonomy" id="330879"/>
    <lineage>
        <taxon>Eukaryota</taxon>
        <taxon>Fungi</taxon>
        <taxon>Dikarya</taxon>
        <taxon>Ascomycota</taxon>
        <taxon>Pezizomycotina</taxon>
        <taxon>Eurotiomycetes</taxon>
        <taxon>Eurotiomycetidae</taxon>
        <taxon>Eurotiales</taxon>
        <taxon>Aspergillaceae</taxon>
        <taxon>Aspergillus</taxon>
        <taxon>Aspergillus subgen. Fumigati</taxon>
    </lineage>
</organism>